<keyword id="KW-0025">Alternative splicing</keyword>
<keyword id="KW-0067">ATP-binding</keyword>
<keyword id="KW-0963">Cytoplasm</keyword>
<keyword id="KW-0418">Kinase</keyword>
<keyword id="KW-0547">Nucleotide-binding</keyword>
<keyword id="KW-1185">Reference proteome</keyword>
<keyword id="KW-0723">Serine/threonine-protein kinase</keyword>
<keyword id="KW-0808">Transferase</keyword>
<proteinExistence type="evidence at transcript level"/>
<sequence>MEKYEKLAKTGEGSYGVVFKCRNKTSGQVVAVKKFVESEDDPVVKKIALREIRMLKQLKHPNLVNLIEVFRRKRKMHLVFEYCDHTLLNELERNPNGVADGVIKSVLWQTLQALNFCHIHNCIHRDIKPENILITKQGIIKICDFGFAQILIPGDAYTDYVATRWYRAPELLVGDTQYGSSVDIWAIGCVFAELLTGQPLWPGKSDVDQLYLIIRTLGKLIPRHQSIFKSNGFFHGISIPEPEDMETLEEKFSDVHPVALNFMKGCLKMNPDDRLTCSQLLESSYFDSFQEAQIKRKARNEGRNRRRQQQAPKSAFPRLFLKTKICQVQRNETQTSGNQILPNGPILQNSMVTVMTNINSAVYQVTVLHLLSENFEVKS</sequence>
<comment type="catalytic activity">
    <reaction>
        <text>L-seryl-[protein] + ATP = O-phospho-L-seryl-[protein] + ADP + H(+)</text>
        <dbReference type="Rhea" id="RHEA:17989"/>
        <dbReference type="Rhea" id="RHEA-COMP:9863"/>
        <dbReference type="Rhea" id="RHEA-COMP:11604"/>
        <dbReference type="ChEBI" id="CHEBI:15378"/>
        <dbReference type="ChEBI" id="CHEBI:29999"/>
        <dbReference type="ChEBI" id="CHEBI:30616"/>
        <dbReference type="ChEBI" id="CHEBI:83421"/>
        <dbReference type="ChEBI" id="CHEBI:456216"/>
        <dbReference type="EC" id="2.7.11.22"/>
    </reaction>
</comment>
<comment type="catalytic activity">
    <reaction>
        <text>L-threonyl-[protein] + ATP = O-phospho-L-threonyl-[protein] + ADP + H(+)</text>
        <dbReference type="Rhea" id="RHEA:46608"/>
        <dbReference type="Rhea" id="RHEA-COMP:11060"/>
        <dbReference type="Rhea" id="RHEA-COMP:11605"/>
        <dbReference type="ChEBI" id="CHEBI:15378"/>
        <dbReference type="ChEBI" id="CHEBI:30013"/>
        <dbReference type="ChEBI" id="CHEBI:30616"/>
        <dbReference type="ChEBI" id="CHEBI:61977"/>
        <dbReference type="ChEBI" id="CHEBI:456216"/>
        <dbReference type="EC" id="2.7.11.22"/>
    </reaction>
</comment>
<comment type="subcellular location">
    <subcellularLocation>
        <location evidence="5">Cytoplasm</location>
    </subcellularLocation>
</comment>
<comment type="alternative products">
    <event type="alternative splicing"/>
    <isoform>
        <id>Q5MAI5-1</id>
        <name>1</name>
        <sequence type="displayed"/>
    </isoform>
    <isoform>
        <id>Q5MAI5-2</id>
        <name>2</name>
        <sequence type="described" ref="VSP_055220"/>
    </isoform>
</comment>
<comment type="domain">
    <text>The [NKR]KIAxRE motif seems to be a cyclin-binding region.</text>
</comment>
<comment type="similarity">
    <text evidence="5">Belongs to the protein kinase superfamily. CMGC Ser/Thr protein kinase family. CDC2/CDKX subfamily.</text>
</comment>
<protein>
    <recommendedName>
        <fullName>Cyclin-dependent kinase-like 4</fullName>
        <ecNumber>2.7.11.22</ecNumber>
    </recommendedName>
</protein>
<organism>
    <name type="scientific">Homo sapiens</name>
    <name type="common">Human</name>
    <dbReference type="NCBI Taxonomy" id="9606"/>
    <lineage>
        <taxon>Eukaryota</taxon>
        <taxon>Metazoa</taxon>
        <taxon>Chordata</taxon>
        <taxon>Craniata</taxon>
        <taxon>Vertebrata</taxon>
        <taxon>Euteleostomi</taxon>
        <taxon>Mammalia</taxon>
        <taxon>Eutheria</taxon>
        <taxon>Euarchontoglires</taxon>
        <taxon>Primates</taxon>
        <taxon>Haplorrhini</taxon>
        <taxon>Catarrhini</taxon>
        <taxon>Hominidae</taxon>
        <taxon>Homo</taxon>
    </lineage>
</organism>
<feature type="chain" id="PRO_0000085824" description="Cyclin-dependent kinase-like 4">
    <location>
        <begin position="1"/>
        <end position="379"/>
    </location>
</feature>
<feature type="domain" description="Protein kinase" evidence="1">
    <location>
        <begin position="4"/>
        <end position="286"/>
    </location>
</feature>
<feature type="short sequence motif" description="[NKR]KIAxRE">
    <location>
        <begin position="45"/>
        <end position="51"/>
    </location>
</feature>
<feature type="active site" description="Proton acceptor" evidence="1 2">
    <location>
        <position position="126"/>
    </location>
</feature>
<feature type="binding site" evidence="1">
    <location>
        <begin position="10"/>
        <end position="18"/>
    </location>
    <ligand>
        <name>ATP</name>
        <dbReference type="ChEBI" id="CHEBI:30616"/>
    </ligand>
</feature>
<feature type="binding site" evidence="1">
    <location>
        <position position="33"/>
    </location>
    <ligand>
        <name>ATP</name>
        <dbReference type="ChEBI" id="CHEBI:30616"/>
    </ligand>
</feature>
<feature type="splice variant" id="VSP_055220" description="In isoform 2." evidence="4">
    <original>QAPKSAFPRLFLKTKICQVQRNETQTSGNQILPNGPILQNSMVTVMTNINSAVYQVTVLHLLSENFEV</original>
    <variation>VLPL</variation>
    <location>
        <begin position="310"/>
        <end position="377"/>
    </location>
</feature>
<feature type="sequence variant" id="VAR_041992" description="In dbSNP:rs35947084." evidence="3">
    <original>S</original>
    <variation>P</variation>
    <location>
        <position position="38"/>
    </location>
</feature>
<feature type="sequence variant" id="VAR_041993" description="In dbSNP:rs35454041." evidence="3">
    <original>R</original>
    <variation>H</variation>
    <location>
        <position position="53"/>
    </location>
</feature>
<feature type="sequence variant" id="VAR_053930" description="In dbSNP:rs6731369.">
    <original>H</original>
    <variation>Y</variation>
    <location>
        <position position="118"/>
    </location>
</feature>
<feature type="sequence variant" id="VAR_041994" description="In dbSNP:rs56353587." evidence="3">
    <original>F</original>
    <variation>C</variation>
    <location>
        <position position="228"/>
    </location>
</feature>
<feature type="sequence variant" id="VAR_041995" description="In dbSNP:rs34819676." evidence="3">
    <original>S</original>
    <variation>Y</variation>
    <location>
        <position position="288"/>
    </location>
</feature>
<feature type="sequence variant" id="VAR_041996" description="In dbSNP:rs56330730." evidence="3">
    <original>R</original>
    <variation>C</variation>
    <location>
        <position position="307"/>
    </location>
</feature>
<evidence type="ECO:0000255" key="1">
    <source>
        <dbReference type="PROSITE-ProRule" id="PRU00159"/>
    </source>
</evidence>
<evidence type="ECO:0000255" key="2">
    <source>
        <dbReference type="PROSITE-ProRule" id="PRU10027"/>
    </source>
</evidence>
<evidence type="ECO:0000269" key="3">
    <source>
    </source>
</evidence>
<evidence type="ECO:0000303" key="4">
    <source ref="1"/>
</evidence>
<evidence type="ECO:0000305" key="5"/>
<name>CDKL4_HUMAN</name>
<reference key="1">
    <citation type="submission" date="2004-12" db="EMBL/GenBank/DDBJ databases">
        <title>Molecular cloning and characterization of human cyclin-dependent kinase-like 4.</title>
        <authorList>
            <person name="Wang P.Z."/>
            <person name="Wang F."/>
            <person name="Wang X."/>
            <person name="Wu J."/>
        </authorList>
    </citation>
    <scope>NUCLEOTIDE SEQUENCE [MRNA] (ISOFORMS 1 AND 2)</scope>
</reference>
<reference key="2">
    <citation type="journal article" date="2005" name="Nature">
        <title>Generation and annotation of the DNA sequences of human chromosomes 2 and 4.</title>
        <authorList>
            <person name="Hillier L.W."/>
            <person name="Graves T.A."/>
            <person name="Fulton R.S."/>
            <person name="Fulton L.A."/>
            <person name="Pepin K.H."/>
            <person name="Minx P."/>
            <person name="Wagner-McPherson C."/>
            <person name="Layman D."/>
            <person name="Wylie K."/>
            <person name="Sekhon M."/>
            <person name="Becker M.C."/>
            <person name="Fewell G.A."/>
            <person name="Delehaunty K.D."/>
            <person name="Miner T.L."/>
            <person name="Nash W.E."/>
            <person name="Kremitzki C."/>
            <person name="Oddy L."/>
            <person name="Du H."/>
            <person name="Sun H."/>
            <person name="Bradshaw-Cordum H."/>
            <person name="Ali J."/>
            <person name="Carter J."/>
            <person name="Cordes M."/>
            <person name="Harris A."/>
            <person name="Isak A."/>
            <person name="van Brunt A."/>
            <person name="Nguyen C."/>
            <person name="Du F."/>
            <person name="Courtney L."/>
            <person name="Kalicki J."/>
            <person name="Ozersky P."/>
            <person name="Abbott S."/>
            <person name="Armstrong J."/>
            <person name="Belter E.A."/>
            <person name="Caruso L."/>
            <person name="Cedroni M."/>
            <person name="Cotton M."/>
            <person name="Davidson T."/>
            <person name="Desai A."/>
            <person name="Elliott G."/>
            <person name="Erb T."/>
            <person name="Fronick C."/>
            <person name="Gaige T."/>
            <person name="Haakenson W."/>
            <person name="Haglund K."/>
            <person name="Holmes A."/>
            <person name="Harkins R."/>
            <person name="Kim K."/>
            <person name="Kruchowski S.S."/>
            <person name="Strong C.M."/>
            <person name="Grewal N."/>
            <person name="Goyea E."/>
            <person name="Hou S."/>
            <person name="Levy A."/>
            <person name="Martinka S."/>
            <person name="Mead K."/>
            <person name="McLellan M.D."/>
            <person name="Meyer R."/>
            <person name="Randall-Maher J."/>
            <person name="Tomlinson C."/>
            <person name="Dauphin-Kohlberg S."/>
            <person name="Kozlowicz-Reilly A."/>
            <person name="Shah N."/>
            <person name="Swearengen-Shahid S."/>
            <person name="Snider J."/>
            <person name="Strong J.T."/>
            <person name="Thompson J."/>
            <person name="Yoakum M."/>
            <person name="Leonard S."/>
            <person name="Pearman C."/>
            <person name="Trani L."/>
            <person name="Radionenko M."/>
            <person name="Waligorski J.E."/>
            <person name="Wang C."/>
            <person name="Rock S.M."/>
            <person name="Tin-Wollam A.-M."/>
            <person name="Maupin R."/>
            <person name="Latreille P."/>
            <person name="Wendl M.C."/>
            <person name="Yang S.-P."/>
            <person name="Pohl C."/>
            <person name="Wallis J.W."/>
            <person name="Spieth J."/>
            <person name="Bieri T.A."/>
            <person name="Berkowicz N."/>
            <person name="Nelson J.O."/>
            <person name="Osborne J."/>
            <person name="Ding L."/>
            <person name="Meyer R."/>
            <person name="Sabo A."/>
            <person name="Shotland Y."/>
            <person name="Sinha P."/>
            <person name="Wohldmann P.E."/>
            <person name="Cook L.L."/>
            <person name="Hickenbotham M.T."/>
            <person name="Eldred J."/>
            <person name="Williams D."/>
            <person name="Jones T.A."/>
            <person name="She X."/>
            <person name="Ciccarelli F.D."/>
            <person name="Izaurralde E."/>
            <person name="Taylor J."/>
            <person name="Schmutz J."/>
            <person name="Myers R.M."/>
            <person name="Cox D.R."/>
            <person name="Huang X."/>
            <person name="McPherson J.D."/>
            <person name="Mardis E.R."/>
            <person name="Clifton S.W."/>
            <person name="Warren W.C."/>
            <person name="Chinwalla A.T."/>
            <person name="Eddy S.R."/>
            <person name="Marra M.A."/>
            <person name="Ovcharenko I."/>
            <person name="Furey T.S."/>
            <person name="Miller W."/>
            <person name="Eichler E.E."/>
            <person name="Bork P."/>
            <person name="Suyama M."/>
            <person name="Torrents D."/>
            <person name="Waterston R.H."/>
            <person name="Wilson R.K."/>
        </authorList>
    </citation>
    <scope>NUCLEOTIDE SEQUENCE [LARGE SCALE GENOMIC DNA]</scope>
</reference>
<reference key="3">
    <citation type="journal article" date="2007" name="Nature">
        <title>Patterns of somatic mutation in human cancer genomes.</title>
        <authorList>
            <person name="Greenman C."/>
            <person name="Stephens P."/>
            <person name="Smith R."/>
            <person name="Dalgliesh G.L."/>
            <person name="Hunter C."/>
            <person name="Bignell G."/>
            <person name="Davies H."/>
            <person name="Teague J."/>
            <person name="Butler A."/>
            <person name="Stevens C."/>
            <person name="Edkins S."/>
            <person name="O'Meara S."/>
            <person name="Vastrik I."/>
            <person name="Schmidt E.E."/>
            <person name="Avis T."/>
            <person name="Barthorpe S."/>
            <person name="Bhamra G."/>
            <person name="Buck G."/>
            <person name="Choudhury B."/>
            <person name="Clements J."/>
            <person name="Cole J."/>
            <person name="Dicks E."/>
            <person name="Forbes S."/>
            <person name="Gray K."/>
            <person name="Halliday K."/>
            <person name="Harrison R."/>
            <person name="Hills K."/>
            <person name="Hinton J."/>
            <person name="Jenkinson A."/>
            <person name="Jones D."/>
            <person name="Menzies A."/>
            <person name="Mironenko T."/>
            <person name="Perry J."/>
            <person name="Raine K."/>
            <person name="Richardson D."/>
            <person name="Shepherd R."/>
            <person name="Small A."/>
            <person name="Tofts C."/>
            <person name="Varian J."/>
            <person name="Webb T."/>
            <person name="West S."/>
            <person name="Widaa S."/>
            <person name="Yates A."/>
            <person name="Cahill D.P."/>
            <person name="Louis D.N."/>
            <person name="Goldstraw P."/>
            <person name="Nicholson A.G."/>
            <person name="Brasseur F."/>
            <person name="Looijenga L."/>
            <person name="Weber B.L."/>
            <person name="Chiew Y.-E."/>
            <person name="DeFazio A."/>
            <person name="Greaves M.F."/>
            <person name="Green A.R."/>
            <person name="Campbell P."/>
            <person name="Birney E."/>
            <person name="Easton D.F."/>
            <person name="Chenevix-Trench G."/>
            <person name="Tan M.-H."/>
            <person name="Khoo S.K."/>
            <person name="Teh B.T."/>
            <person name="Yuen S.T."/>
            <person name="Leung S.Y."/>
            <person name="Wooster R."/>
            <person name="Futreal P.A."/>
            <person name="Stratton M.R."/>
        </authorList>
    </citation>
    <scope>VARIANTS [LARGE SCALE ANALYSIS] PRO-38; HIS-53; CYS-228; TYR-288 AND CYS-307</scope>
</reference>
<accession>Q5MAI5</accession>
<accession>Q2NME9</accession>
<gene>
    <name type="primary">CDKL4</name>
</gene>
<dbReference type="EC" id="2.7.11.22"/>
<dbReference type="EMBL" id="AY845084">
    <property type="protein sequence ID" value="AAW30008.1"/>
    <property type="molecule type" value="mRNA"/>
</dbReference>
<dbReference type="EMBL" id="AY847283">
    <property type="protein sequence ID" value="AAW31760.1"/>
    <property type="molecule type" value="mRNA"/>
</dbReference>
<dbReference type="EMBL" id="AC079615">
    <property type="status" value="NOT_ANNOTATED_CDS"/>
    <property type="molecule type" value="Genomic_DNA"/>
</dbReference>
<dbReference type="EMBL" id="AC092672">
    <property type="status" value="NOT_ANNOTATED_CDS"/>
    <property type="molecule type" value="Genomic_DNA"/>
</dbReference>
<dbReference type="CCDS" id="CCDS33184.1">
    <molecule id="Q5MAI5-2"/>
</dbReference>
<dbReference type="CCDS" id="CCDS86834.1">
    <molecule id="Q5MAI5-1"/>
</dbReference>
<dbReference type="RefSeq" id="NP_001009565.1">
    <molecule id="Q5MAI5-2"/>
    <property type="nucleotide sequence ID" value="NM_001009565.2"/>
</dbReference>
<dbReference type="RefSeq" id="NP_001333840.1">
    <molecule id="Q5MAI5-1"/>
    <property type="nucleotide sequence ID" value="NM_001346911.1"/>
</dbReference>
<dbReference type="RefSeq" id="XP_011531117.1">
    <molecule id="Q5MAI5-1"/>
    <property type="nucleotide sequence ID" value="XM_011532815.4"/>
</dbReference>
<dbReference type="RefSeq" id="XP_047300098.1">
    <molecule id="Q5MAI5-2"/>
    <property type="nucleotide sequence ID" value="XM_047444142.1"/>
</dbReference>
<dbReference type="RefSeq" id="XP_054197740.1">
    <molecule id="Q5MAI5-1"/>
    <property type="nucleotide sequence ID" value="XM_054341765.1"/>
</dbReference>
<dbReference type="SMR" id="Q5MAI5"/>
<dbReference type="BioGRID" id="131301">
    <property type="interactions" value="14"/>
</dbReference>
<dbReference type="FunCoup" id="Q5MAI5">
    <property type="interactions" value="575"/>
</dbReference>
<dbReference type="IntAct" id="Q5MAI5">
    <property type="interactions" value="8"/>
</dbReference>
<dbReference type="STRING" id="9606.ENSP00000378476"/>
<dbReference type="BindingDB" id="Q5MAI5"/>
<dbReference type="ChEMBL" id="CHEMBL4523326"/>
<dbReference type="iPTMnet" id="Q5MAI5"/>
<dbReference type="PhosphoSitePlus" id="Q5MAI5"/>
<dbReference type="BioMuta" id="CDKL4"/>
<dbReference type="DMDM" id="74762208"/>
<dbReference type="jPOST" id="Q5MAI5"/>
<dbReference type="MassIVE" id="Q5MAI5"/>
<dbReference type="PaxDb" id="9606-ENSP00000368080"/>
<dbReference type="PeptideAtlas" id="Q5MAI5"/>
<dbReference type="ProteomicsDB" id="61426"/>
<dbReference type="ProteomicsDB" id="63572">
    <molecule id="Q5MAI5-1"/>
</dbReference>
<dbReference type="Antibodypedia" id="29610">
    <property type="antibodies" value="192 antibodies from 25 providers"/>
</dbReference>
<dbReference type="DNASU" id="344387"/>
<dbReference type="Ensembl" id="ENST00000378803.6">
    <molecule id="Q5MAI5-2"/>
    <property type="protein sequence ID" value="ENSP00000368080.1"/>
    <property type="gene ID" value="ENSG00000205111.10"/>
</dbReference>
<dbReference type="Ensembl" id="ENST00000395035.4">
    <molecule id="Q5MAI5-1"/>
    <property type="protein sequence ID" value="ENSP00000378476.3"/>
    <property type="gene ID" value="ENSG00000205111.10"/>
</dbReference>
<dbReference type="GeneID" id="344387"/>
<dbReference type="KEGG" id="hsa:344387"/>
<dbReference type="UCSC" id="uc002rrm.3">
    <molecule id="Q5MAI5-1"/>
    <property type="organism name" value="human"/>
</dbReference>
<dbReference type="AGR" id="HGNC:19287"/>
<dbReference type="CTD" id="344387"/>
<dbReference type="DisGeNET" id="344387"/>
<dbReference type="GeneCards" id="CDKL4"/>
<dbReference type="HGNC" id="HGNC:19287">
    <property type="gene designation" value="CDKL4"/>
</dbReference>
<dbReference type="HPA" id="ENSG00000205111">
    <property type="expression patterns" value="Tissue enhanced (testis)"/>
</dbReference>
<dbReference type="neXtProt" id="NX_Q5MAI5"/>
<dbReference type="PharmGKB" id="PA134892546"/>
<dbReference type="VEuPathDB" id="HostDB:ENSG00000205111"/>
<dbReference type="eggNOG" id="KOG0593">
    <property type="taxonomic scope" value="Eukaryota"/>
</dbReference>
<dbReference type="GeneTree" id="ENSGT00940000161857"/>
<dbReference type="HOGENOM" id="CLU_000288_181_1_1"/>
<dbReference type="InParanoid" id="Q5MAI5"/>
<dbReference type="OMA" id="MEMFRQN"/>
<dbReference type="OrthoDB" id="548217at2759"/>
<dbReference type="PAN-GO" id="Q5MAI5">
    <property type="GO annotations" value="3 GO annotations based on evolutionary models"/>
</dbReference>
<dbReference type="PhylomeDB" id="Q5MAI5"/>
<dbReference type="TreeFam" id="TF101031"/>
<dbReference type="PathwayCommons" id="Q5MAI5"/>
<dbReference type="SignaLink" id="Q5MAI5"/>
<dbReference type="BioGRID-ORCS" id="344387">
    <property type="hits" value="7 hits in 1178 CRISPR screens"/>
</dbReference>
<dbReference type="ChiTaRS" id="CDKL4">
    <property type="organism name" value="human"/>
</dbReference>
<dbReference type="GenomeRNAi" id="344387"/>
<dbReference type="Pharos" id="Q5MAI5">
    <property type="development level" value="Tdark"/>
</dbReference>
<dbReference type="PRO" id="PR:Q5MAI5"/>
<dbReference type="Proteomes" id="UP000005640">
    <property type="component" value="Chromosome 2"/>
</dbReference>
<dbReference type="RNAct" id="Q5MAI5">
    <property type="molecule type" value="protein"/>
</dbReference>
<dbReference type="Bgee" id="ENSG00000205111">
    <property type="expression patterns" value="Expressed in male germ line stem cell (sensu Vertebrata) in testis and 93 other cell types or tissues"/>
</dbReference>
<dbReference type="ExpressionAtlas" id="Q5MAI5">
    <property type="expression patterns" value="baseline and differential"/>
</dbReference>
<dbReference type="GO" id="GO:0005737">
    <property type="term" value="C:cytoplasm"/>
    <property type="evidence" value="ECO:0007669"/>
    <property type="project" value="UniProtKB-SubCell"/>
</dbReference>
<dbReference type="GO" id="GO:0005634">
    <property type="term" value="C:nucleus"/>
    <property type="evidence" value="ECO:0000318"/>
    <property type="project" value="GO_Central"/>
</dbReference>
<dbReference type="GO" id="GO:0005524">
    <property type="term" value="F:ATP binding"/>
    <property type="evidence" value="ECO:0007669"/>
    <property type="project" value="UniProtKB-KW"/>
</dbReference>
<dbReference type="GO" id="GO:0004693">
    <property type="term" value="F:cyclin-dependent protein serine/threonine kinase activity"/>
    <property type="evidence" value="ECO:0007669"/>
    <property type="project" value="UniProtKB-EC"/>
</dbReference>
<dbReference type="GO" id="GO:0106310">
    <property type="term" value="F:protein serine kinase activity"/>
    <property type="evidence" value="ECO:0007669"/>
    <property type="project" value="RHEA"/>
</dbReference>
<dbReference type="GO" id="GO:0004674">
    <property type="term" value="F:protein serine/threonine kinase activity"/>
    <property type="evidence" value="ECO:0000318"/>
    <property type="project" value="GO_Central"/>
</dbReference>
<dbReference type="CDD" id="cd07847">
    <property type="entry name" value="STKc_CDKL1_4"/>
    <property type="match status" value="1"/>
</dbReference>
<dbReference type="FunFam" id="1.10.510.10:FF:000191">
    <property type="entry name" value="cyclin-dependent kinase-like 1 isoform X1"/>
    <property type="match status" value="1"/>
</dbReference>
<dbReference type="FunFam" id="3.30.200.20:FF:000049">
    <property type="entry name" value="cyclin-dependent kinase-like 1 isoform X1"/>
    <property type="match status" value="1"/>
</dbReference>
<dbReference type="Gene3D" id="3.30.200.20">
    <property type="entry name" value="Phosphorylase Kinase, domain 1"/>
    <property type="match status" value="1"/>
</dbReference>
<dbReference type="Gene3D" id="1.10.510.10">
    <property type="entry name" value="Transferase(Phosphotransferase) domain 1"/>
    <property type="match status" value="1"/>
</dbReference>
<dbReference type="InterPro" id="IPR050108">
    <property type="entry name" value="CDK"/>
</dbReference>
<dbReference type="InterPro" id="IPR011009">
    <property type="entry name" value="Kinase-like_dom_sf"/>
</dbReference>
<dbReference type="InterPro" id="IPR000719">
    <property type="entry name" value="Prot_kinase_dom"/>
</dbReference>
<dbReference type="InterPro" id="IPR008271">
    <property type="entry name" value="Ser/Thr_kinase_AS"/>
</dbReference>
<dbReference type="PANTHER" id="PTHR24056">
    <property type="entry name" value="CELL DIVISION PROTEIN KINASE"/>
    <property type="match status" value="1"/>
</dbReference>
<dbReference type="PANTHER" id="PTHR24056:SF120">
    <property type="entry name" value="CYCLIN-DEPENDENT KINASE-LIKE 4"/>
    <property type="match status" value="1"/>
</dbReference>
<dbReference type="Pfam" id="PF00069">
    <property type="entry name" value="Pkinase"/>
    <property type="match status" value="1"/>
</dbReference>
<dbReference type="SMART" id="SM00220">
    <property type="entry name" value="S_TKc"/>
    <property type="match status" value="1"/>
</dbReference>
<dbReference type="SUPFAM" id="SSF56112">
    <property type="entry name" value="Protein kinase-like (PK-like)"/>
    <property type="match status" value="1"/>
</dbReference>
<dbReference type="PROSITE" id="PS50011">
    <property type="entry name" value="PROTEIN_KINASE_DOM"/>
    <property type="match status" value="1"/>
</dbReference>
<dbReference type="PROSITE" id="PS00108">
    <property type="entry name" value="PROTEIN_KINASE_ST"/>
    <property type="match status" value="1"/>
</dbReference>